<evidence type="ECO:0000250" key="1">
    <source>
        <dbReference type="UniProtKB" id="P28661"/>
    </source>
</evidence>
<evidence type="ECO:0000250" key="2">
    <source>
        <dbReference type="UniProtKB" id="Q9UH03"/>
    </source>
</evidence>
<evidence type="ECO:0000255" key="3"/>
<evidence type="ECO:0000255" key="4">
    <source>
        <dbReference type="PROSITE-ProRule" id="PRU01056"/>
    </source>
</evidence>
<evidence type="ECO:0000256" key="5">
    <source>
        <dbReference type="SAM" id="MobiDB-lite"/>
    </source>
</evidence>
<evidence type="ECO:0000269" key="6">
    <source>
    </source>
</evidence>
<evidence type="ECO:0000269" key="7">
    <source>
    </source>
</evidence>
<evidence type="ECO:0000269" key="8">
    <source>
    </source>
</evidence>
<evidence type="ECO:0000269" key="9">
    <source>
    </source>
</evidence>
<evidence type="ECO:0000269" key="10">
    <source>
    </source>
</evidence>
<evidence type="ECO:0000269" key="11">
    <source>
    </source>
</evidence>
<evidence type="ECO:0000269" key="12">
    <source>
    </source>
</evidence>
<evidence type="ECO:0000269" key="13">
    <source>
    </source>
</evidence>
<evidence type="ECO:0000269" key="14">
    <source>
    </source>
</evidence>
<evidence type="ECO:0000269" key="15">
    <source>
    </source>
</evidence>
<evidence type="ECO:0000269" key="16">
    <source>
    </source>
</evidence>
<evidence type="ECO:0000269" key="17">
    <source>
    </source>
</evidence>
<evidence type="ECO:0000269" key="18">
    <source>
    </source>
</evidence>
<evidence type="ECO:0000269" key="19">
    <source>
    </source>
</evidence>
<evidence type="ECO:0000269" key="20">
    <source>
    </source>
</evidence>
<evidence type="ECO:0000269" key="21">
    <source>
    </source>
</evidence>
<evidence type="ECO:0000269" key="22">
    <source>
    </source>
</evidence>
<evidence type="ECO:0000303" key="23">
    <source>
    </source>
</evidence>
<evidence type="ECO:0000303" key="24">
    <source>
    </source>
</evidence>
<evidence type="ECO:0000303" key="25">
    <source>
    </source>
</evidence>
<evidence type="ECO:0000303" key="26">
    <source>
    </source>
</evidence>
<evidence type="ECO:0000303" key="27">
    <source>
    </source>
</evidence>
<evidence type="ECO:0000303" key="28">
    <source>
    </source>
</evidence>
<evidence type="ECO:0000305" key="29"/>
<evidence type="ECO:0000312" key="30">
    <source>
        <dbReference type="HGNC" id="HGNC:9165"/>
    </source>
</evidence>
<evidence type="ECO:0007744" key="31">
    <source>
    </source>
</evidence>
<evidence type="ECO:0007744" key="32">
    <source>
    </source>
</evidence>
<evidence type="ECO:0007829" key="33">
    <source>
        <dbReference type="PDB" id="6WB3"/>
    </source>
</evidence>
<feature type="chain" id="PRO_0000173519" description="Septin-4">
    <location>
        <begin position="1"/>
        <end position="478"/>
    </location>
</feature>
<feature type="domain" description="Septin-type G" evidence="4">
    <location>
        <begin position="141"/>
        <end position="414"/>
    </location>
</feature>
<feature type="region of interest" description="Disordered" evidence="5">
    <location>
        <begin position="1"/>
        <end position="115"/>
    </location>
</feature>
<feature type="region of interest" description="G1 motif" evidence="4">
    <location>
        <begin position="151"/>
        <end position="158"/>
    </location>
</feature>
<feature type="region of interest" description="G3 motif" evidence="4">
    <location>
        <begin position="208"/>
        <end position="211"/>
    </location>
</feature>
<feature type="region of interest" description="G4 motif" evidence="4">
    <location>
        <begin position="289"/>
        <end position="292"/>
    </location>
</feature>
<feature type="region of interest" description="Disordered" evidence="5">
    <location>
        <begin position="428"/>
        <end position="448"/>
    </location>
</feature>
<feature type="coiled-coil region" evidence="3">
    <location>
        <begin position="447"/>
        <end position="478"/>
    </location>
</feature>
<feature type="compositionally biased region" description="Basic and acidic residues" evidence="5">
    <location>
        <begin position="13"/>
        <end position="26"/>
    </location>
</feature>
<feature type="compositionally biased region" description="Low complexity" evidence="5">
    <location>
        <begin position="95"/>
        <end position="108"/>
    </location>
</feature>
<feature type="binding site" evidence="2">
    <location>
        <begin position="151"/>
        <end position="158"/>
    </location>
    <ligand>
        <name>GTP</name>
        <dbReference type="ChEBI" id="CHEBI:37565"/>
    </ligand>
</feature>
<feature type="binding site" evidence="2">
    <location>
        <position position="185"/>
    </location>
    <ligand>
        <name>GTP</name>
        <dbReference type="ChEBI" id="CHEBI:37565"/>
    </ligand>
</feature>
<feature type="binding site" evidence="2">
    <location>
        <begin position="290"/>
        <end position="298"/>
    </location>
    <ligand>
        <name>GTP</name>
        <dbReference type="ChEBI" id="CHEBI:37565"/>
    </ligand>
</feature>
<feature type="binding site" evidence="2">
    <location>
        <position position="348"/>
    </location>
    <ligand>
        <name>GTP</name>
        <dbReference type="ChEBI" id="CHEBI:37565"/>
    </ligand>
</feature>
<feature type="binding site" evidence="2">
    <location>
        <position position="363"/>
    </location>
    <ligand>
        <name>GTP</name>
        <dbReference type="ChEBI" id="CHEBI:37565"/>
    </ligand>
</feature>
<feature type="modified residue" description="Phosphoserine" evidence="32">
    <location>
        <position position="117"/>
    </location>
</feature>
<feature type="modified residue" description="Phosphoserine" evidence="32">
    <location>
        <position position="118"/>
    </location>
</feature>
<feature type="modified residue" description="Phosphoserine" evidence="31 32">
    <location>
        <position position="325"/>
    </location>
</feature>
<feature type="modified residue" description="Phosphoserine" evidence="1">
    <location>
        <position position="432"/>
    </location>
</feature>
<feature type="modified residue" description="Phosphothreonine" evidence="1">
    <location>
        <position position="434"/>
    </location>
</feature>
<feature type="splice variant" id="VSP_060788" description="In isoform 8.">
    <original>MDRSLGWQGNSVPEDRTEAGIKRFLEDTTDDGELSKFVKDFSGNASCHPPEAKTWASRPQVPEPRPQAPDLYDDDLEFRPPSRPQSSDNQQYFCAPAPLSPSARPRSPWGKLDPYDSSEDDKEYVGFATLPNQVHRKSVKKGFDFTLMVAGESGLGKSTLVNSLFLTDLYRDRKLLGAEERIMQTVEITKHAVDIEEKGVRLRLTIVDTPGFGDAVNNTECWKPVAEYIDQQFEQYFRDESGLNRKNIQDNRVHCCLYFISPFGHGLRPLDVEFMKALHQRVNIVPILAKADTLTPPEVDHKKRKIREEIEHFGIKIYQFPDCDSDEDEDFKLQDQALKESIPFAVIGSNTVVEARGRRVRGRLYPWGIVEVENPGHCDFVKLRTMLVRTHMQDLKDVTRETHYENYRAQCIQSMTRLVVKERNRNKLTRESGTDFPIPAVPPGTDPETEKLIREKDEELRRMQEMLHKIQKQMKENY</original>
    <variation>MVKTNKPGAKVAVSAQRGSEVTTNTSPQQGHGYVLASSHRSAAVSLNPSHRRSEAAHPTTPHSASDYPRSVSLQSGPGHYAVPTPRGPETGPRTESSRHSSPHLKSQKTQTLASHASSRQWKVSPPREEAARRGSESKSGREVGHHASSIPDAKSTHQLSFQDQKNNLQSQILEDDPPSKVQNPQGVRVPRRILSYPKDEAVQTEPIQRITTTSEIRSPRSPSLLEHGSSCVSADYQTAQRRVPVEESETGPYGPIPSKPKALYRNMNLDSLLKLSVLKDSDGVHRVSARVDPESLHKYSAYPETKPSAKVLVSSQVESNVRTPIRGNSEVGRRVTISPGVQSVEPTHHVTVPSVSEGSHKSSMFVTPEPIYKQQTQKPPEITYMSQGPTPRYPELSQKPSIHAELELTPRPLPPRSLPRYGPDSSWWPLLNPEVETPQSQLTTPDFEPKCSPSLDLLLSGFKIDSSPFCEDLKFQREKASLSPPSPPKEFPSWAPLSEVPQTPKHTCKQPIQRFTAFFLDVSEEMYNRVIWWLKGLCFSLLWAHCGSLGDGRTGEEWHLCIYRAGSFRR</variation>
    <location>
        <begin position="1"/>
        <end position="478"/>
    </location>
</feature>
<feature type="splice variant" id="VSP_038302" description="In isoform 5." evidence="26">
    <location>
        <begin position="1"/>
        <end position="147"/>
    </location>
</feature>
<feature type="splice variant" id="VSP_006050" description="In isoform 2 and isoform ARTS." evidence="23 24 26 27">
    <original>MDRSLGWQGNSVPEDRTEAG</original>
    <variation>M</variation>
    <location>
        <begin position="1"/>
        <end position="20"/>
    </location>
</feature>
<feature type="splice variant" id="VSP_038303" description="In isoform 3." evidence="26">
    <original>MDRSLGWQGNSVPEDRTEAG</original>
    <variation>MPGFYSVMTDEE</variation>
    <location>
        <begin position="1"/>
        <end position="20"/>
    </location>
</feature>
<feature type="splice variant" id="VSP_038304" description="In isoform 4." evidence="26">
    <original>MDRSLGWQGNSVPEDRTEAG</original>
    <variation>MRSSPALFSSRAAPQKPRKEGSQAAGLLVFSDSLE</variation>
    <location>
        <begin position="1"/>
        <end position="20"/>
    </location>
</feature>
<feature type="splice variant" id="VSP_060789" description="In isoform 7.">
    <original>MDRSLGWQGNSVPEDRTEAG</original>
    <variation>MVKTNKPGAKVAVSAQRGSEVTTNTSPQQGHGYVLASSHRSAAVSLNPSHRRSEAAHPTTPHSASDYPRSVSLQSGPGHYAVPTPRGPETGPRTESSRHSSPHLKSQKTQTLASHASSRQWKVSPPREEAARRGSESKSGREVGHHASSIPDAKSTHQLSFQDQKNNLQSQILEDDPPSKVQNPQGVRVPRRILSYPKDEAVQTEPIQRITTTSEIRSPRSPSLLEHGSSCVSADYQTAQRRVPVEESETGPYGPIPSKPKALYRNMNLDSLLKLSVLKDSDGVHRVSARVDPESLHKYSAYPETKPSAKVLVSSQVESNVRTPIRGNSEVGRRVTISPGVQSVEPTHHVTVPSVSEGSHKSSMFVTPEPIYKQQTQKPPEITYMSQGPTPRYPELSQKPSIHAELELTPRPLPPRSLPRYGPDSSWWPLLNPEVETPQSQLTTPDFEPKCSPSLDLLLSGFKIDSSPFCEDLKFQREKASLSPPSPPKEFPSWAPLSEVPQTPKHTCKQPIQRFTAFFLDVSEEMYNRVIWWLKDEE</variation>
    <location>
        <begin position="1"/>
        <end position="20"/>
    </location>
</feature>
<feature type="splice variant" id="VSP_038305" description="In isoform ARTS." evidence="23">
    <original>LRPLDVEFMKALHQRVNIVPILAKADT</original>
    <variation>YGPSLRLLAPPGAVKGTGQEHQGQGCH</variation>
    <location>
        <begin position="267"/>
        <end position="293"/>
    </location>
</feature>
<feature type="splice variant" id="VSP_038306" description="In isoform ARTS." evidence="23">
    <location>
        <begin position="294"/>
        <end position="478"/>
    </location>
</feature>
<feature type="sequence variant" id="VAR_051935" description="In dbSNP:rs17741424.">
    <original>E</original>
    <variation>V</variation>
    <location>
        <position position="311"/>
    </location>
</feature>
<feature type="sequence conflict" description="In Ref. 7; BAG37789." evidence="29" ref="7">
    <original>G</original>
    <variation>D</variation>
    <location>
        <position position="156"/>
    </location>
</feature>
<feature type="sequence conflict" description="In Ref. 7; BAG63517." evidence="29" ref="7">
    <original>K</original>
    <variation>E</variation>
    <location>
        <position position="382"/>
    </location>
</feature>
<feature type="helix" evidence="33">
    <location>
        <begin position="449"/>
        <end position="476"/>
    </location>
</feature>
<feature type="mutagenesis site" description="Loss of TGF-beta-induced apoptosis. No translocation to the nucleus following TGF-beta treatment. Loss of XIAP-binding." evidence="6 10">
    <original>LLG</original>
    <variation>ENP</variation>
    <location sequence="O43236-6">
        <begin position="156"/>
        <end position="158"/>
    </location>
</feature>
<feature type="sequence variant" id="VAR_083877" description="In dbSNP:rs8071623." evidence="9 12">
    <original>P</original>
    <variation>T</variation>
    <location sequence="O43236-8">
        <position position="88"/>
    </location>
</feature>
<feature type="sequence conflict" description="In Ref. 8." evidence="29" ref="8">
    <original>V</original>
    <variation>A</variation>
    <location sequence="O43236-8">
        <position position="187"/>
    </location>
</feature>
<comment type="function">
    <text evidence="1 29">Filament-forming cytoskeletal GTPase (Probable). Pro-apoptotic protein involved in LGR5-positive intestinal stem cell and Paneth cell expansion in the intestines, via its interaction with XIAP (By similarity). May also play a role in the regulation of cell fate in the intestine (By similarity). Positive regulator of apoptosis involved in hematopoietic stem cell homeostasis; via its interaction with XIAP (By similarity). Negative regulator of repair and hair follicle regeneration in response to injury, due to inhibition of hair follicle stem cell proliferation, potentially via its interaction with XIAP (By similarity). Plays an important role in male fertility and sperm motility (By similarity). During spermiogenesis, essential for the establishment of the annulus (a fibrous ring structure connecting the midpiece and the principal piece of the sperm flagellum) which is a requisite for the structural and mechanical integrity of the sperm (By similarity). Involved in the migration of cortical neurons and the formation of neuron leading processes during embryonic development (By similarity). Required for dopaminergic metabolism in presynaptic autoreceptors; potentially via activity as a presynaptic scaffold protein (By similarity).</text>
</comment>
<comment type="function">
    <molecule>Isoform ARTS</molecule>
    <text evidence="6 10 13 20">Required for the induction of cell death mediated by TGF-beta and possibly by other apoptotic stimuli (PubMed:11146656, PubMed:15837787). Induces apoptosis through binding and inhibition of XIAP resulting in significant reduction in XIAP levels, leading to caspase activation and cell death (PubMed:15029247). Mediates the interaction between BCL2 and XIAP, thereby positively regulating the ubiquitination and degradation of BCL2 and promoting apoptosis (PubMed:29020630).</text>
</comment>
<comment type="subunit">
    <text evidence="1 11 16 18 19">Septins polymerize into heterooligomeric protein complexes that form filaments, and can associate with cellular membranes, actin filaments and microtubules. GTPase activity is required for filament formation. Interacts with SEPTIN8 (PubMed:15116257). In a mesenchymal cell line, interacts with SEPTIN9 isoform 2 variants HNA Trp-106 and Phe-111, but not the wild type SEPTIN9 (PubMed:17546647). Component of a septin core octameric complex consisting of SEPTIN12, SEPTIN7, SEPTIN6 and SEPTIN2 or SEPTIN4 in the order 12-7-6-2-2-6-7-12 or 12-7-6-4-4-6-7-12 (PubMed:25588830). Interacts with SEPTIN14 (via C-terminus) (By similarity). Interacts with DYRK1A (By similarity). Interacts with SLC6A3/DAT and SNCA/alpha-synuclein (By similarity). Interacts with STX1A; in the striatum (By similarity). Interacts with XIAP (via BIR3 domain) following the induction of apoptosis (By similarity). Interacts with AREL1 (via HECT domain); in the cytoplasm following induction of apoptosis (PubMed:23479728).</text>
</comment>
<comment type="subunit">
    <molecule>Isoform ARTS</molecule>
    <text evidence="10 17 20">Part of a complex composed of SEPTIN4 isoform ARTS, XIAP and BCL2, within the complex interacts with both BCL2 (via BH3 domain) and XIAP, ARTS acts as a scaffold protein and stabilizes the complex (PubMed:29020630). Interacts with XIAP (via BIR3 domain) following the induction of apoptosis (PubMed:15029247, PubMed:21695558).</text>
</comment>
<comment type="interaction">
    <interactant intactId="EBI-1047513">
        <id>O43236</id>
    </interactant>
    <interactant intactId="EBI-77613">
        <id>P05067</id>
        <label>APP</label>
    </interactant>
    <organismsDiffer>false</organismsDiffer>
    <experiments>3</experiments>
</comment>
<comment type="interaction">
    <interactant intactId="EBI-1047513">
        <id>O43236</id>
    </interactant>
    <interactant intactId="EBI-349105">
        <id>P63167</id>
        <label>DYNLL1</label>
    </interactant>
    <organismsDiffer>false</organismsDiffer>
    <experiments>5</experiments>
</comment>
<comment type="interaction">
    <interactant intactId="EBI-1047513">
        <id>O43236</id>
    </interactant>
    <interactant intactId="EBI-742371">
        <id>Q96FJ2</id>
        <label>DYNLL2</label>
    </interactant>
    <organismsDiffer>false</organismsDiffer>
    <experiments>3</experiments>
</comment>
<comment type="interaction">
    <interactant intactId="EBI-1047513">
        <id>O43236</id>
    </interactant>
    <interactant intactId="EBI-466029">
        <id>P42858</id>
        <label>HTT</label>
    </interactant>
    <organismsDiffer>false</organismsDiffer>
    <experiments>3</experiments>
</comment>
<comment type="interaction">
    <interactant intactId="EBI-1047513">
        <id>O43236</id>
    </interactant>
    <interactant intactId="EBI-2585067">
        <id>Q8IYM1</id>
        <label>SEPTIN12</label>
    </interactant>
    <organismsDiffer>false</organismsDiffer>
    <experiments>6</experiments>
</comment>
<comment type="interaction">
    <interactant intactId="EBI-1047513">
        <id>O43236</id>
    </interactant>
    <interactant intactId="EBI-985879">
        <id>P37840</id>
        <label>SNCA</label>
    </interactant>
    <organismsDiffer>false</organismsDiffer>
    <experiments>3</experiments>
</comment>
<comment type="interaction">
    <interactant intactId="EBI-4372019">
        <id>O43236-6</id>
    </interactant>
    <interactant intactId="EBI-747107">
        <id>Q8IUQ4</id>
        <label>SIAH1</label>
    </interactant>
    <organismsDiffer>false</organismsDiffer>
    <experiments>2</experiments>
</comment>
<comment type="interaction">
    <interactant intactId="EBI-4372019">
        <id>O43236-6</id>
    </interactant>
    <interactant intactId="EBI-517127">
        <id>P98170</id>
        <label>XIAP</label>
    </interactant>
    <organismsDiffer>false</organismsDiffer>
    <experiments>4</experiments>
</comment>
<comment type="subcellular location">
    <subcellularLocation>
        <location evidence="1">Cytoplasm</location>
    </subcellularLocation>
    <subcellularLocation>
        <location evidence="19">Cell projection</location>
        <location evidence="19">Cilium</location>
        <location evidence="19">Flagellum</location>
    </subcellularLocation>
    <subcellularLocation>
        <location evidence="11">Cytoplasmic vesicle</location>
        <location evidence="11">Secretory vesicle</location>
    </subcellularLocation>
    <subcellularLocation>
        <location evidence="1">Cell projection</location>
        <location evidence="1">Axon</location>
    </subcellularLocation>
    <subcellularLocation>
        <location evidence="1">Cell projection</location>
        <location evidence="1">Dendrite</location>
    </subcellularLocation>
    <subcellularLocation>
        <location evidence="1">Perikaryon</location>
    </subcellularLocation>
    <subcellularLocation>
        <location evidence="15">Synapse</location>
    </subcellularLocation>
    <text evidence="1 11 19">In platelets, found in areas surrounding alpha-granules (PubMed:15116257). Found in the sperm annulus, a fibrous ring structure connecting the midpiece and the principal piece of the sperm flagellum (PubMed:25588830). Expressed and colocalized with SLC6A3 and SNCA in axon terminals, especially at the varicosities (By similarity).</text>
</comment>
<comment type="subcellular location">
    <molecule>Isoform ARTS</molecule>
    <subcellularLocation>
        <location evidence="6 10 17">Mitochondrion</location>
    </subcellularLocation>
    <subcellularLocation>
        <location evidence="6 10">Nucleus</location>
    </subcellularLocation>
    <text evidence="6">While predominantly localized in the mitochondria under resting conditions, translocates into the nucleus after TGF-beta treatment and apoptosis induction.</text>
</comment>
<comment type="alternative products">
    <event type="alternative splicing"/>
    <isoform>
        <id>O43236-1</id>
        <name>1</name>
        <name>PNUTL2</name>
        <name>PNUTL2a</name>
        <name evidence="24">H5/CDCrel-2</name>
        <name>SEPT4_i1</name>
        <sequence type="displayed"/>
    </isoform>
    <isoform>
        <id>O43236-2</id>
        <name>2</name>
        <name>PNUTL2b</name>
        <name evidence="24">CDCrel-1</name>
        <sequence type="described" ref="VSP_006050"/>
    </isoform>
    <isoform>
        <id>O43236-3</id>
        <name>3</name>
        <sequence type="described" ref="VSP_038303"/>
    </isoform>
    <isoform>
        <id>O43236-4</id>
        <name>4</name>
        <sequence type="described" ref="VSP_038304"/>
    </isoform>
    <isoform>
        <id>O43236-5</id>
        <name>5</name>
        <sequence type="described" ref="VSP_038302"/>
    </isoform>
    <isoform>
        <id>O43236-6</id>
        <name evidence="23">ARTS</name>
        <name>SEPT4_i2</name>
        <sequence type="described" ref="VSP_006050 VSP_038305 VSP_038306"/>
    </isoform>
    <isoform>
        <id>O43236-7</id>
        <name>7</name>
        <sequence type="described" ref="VSP_060789"/>
    </isoform>
    <isoform>
        <id>O43236-8</id>
        <name>8</name>
        <sequence type="described" ref="VSP_060788"/>
    </isoform>
</comment>
<comment type="tissue specificity">
    <text evidence="6 7 8 11 14 15 21 22">Widely expressed in adult and fetal tissues with highest expression in adult brain (at protein level), heart, liver and adrenal gland and fetal heart, kidney, liver and lung. Expressed in presynaptic terminals of dopaminergic neurons projecting from the substantia nigra pars compacta to the striatum (at protein level) (PubMed:17296554). Expressed in axonal varicosities in dopaminergic nerve terminals (at protein level) (PubMed:17296554). Expressed in the putamen and in the adjacent cerebral cortex (at protein level) (PubMed:17296554). Expressed in colonic crypts (at protein level) (PubMed:30389919). Also expressed in colorectal cancers and malignant melanomas. Expressed in platelets.</text>
</comment>
<comment type="tissue specificity">
    <molecule>Isoform ARTS</molecule>
    <text evidence="6">Highly expressed in the brain and heart.</text>
</comment>
<comment type="PTM">
    <text evidence="1">Phosphorylated by DYRK1A.</text>
</comment>
<comment type="PTM">
    <text evidence="18">Ubiquitinated by AREL1.</text>
</comment>
<comment type="miscellaneous">
    <text evidence="15">Colocalizes with alpha-synuclein in Lewy bodies in the substantia nigra pars compacta of Parkinson disease patients (PubMed:17296554). Shows reduced expression in dopaminergic nerve terminals of the striatum in sporadic Parkinson disease (PubMed:17296554).</text>
</comment>
<comment type="miscellaneous">
    <molecule>Isoform ARTS</molecule>
    <text evidence="29">May be defective in GTP-binding.</text>
</comment>
<comment type="similarity">
    <text evidence="4">Belongs to the TRAFAC class TrmE-Era-EngA-EngB-Septin-like GTPase superfamily. Septin GTPase family.</text>
</comment>
<proteinExistence type="evidence at protein level"/>
<reference key="1">
    <citation type="journal article" date="1999" name="Genomics">
        <title>Characterization of a novel gene, PNUTL2, on human chromosome 17q22-q23 and its exclusion as the Meckel syndrome gene.</title>
        <authorList>
            <person name="Paavola P."/>
            <person name="Horelli-Kuitunen N."/>
            <person name="Palotie A."/>
            <person name="Peltonen L."/>
        </authorList>
    </citation>
    <scope>NUCLEOTIDE SEQUENCE [MRNA] (ISOFORM 1)</scope>
    <scope>TISSUE SPECIFICITY</scope>
</reference>
<reference key="2">
    <citation type="journal article" date="2000" name="Gene">
        <title>Characterization and expression analysis of two human septin genes, PNUTL1 and PNUTL2.</title>
        <authorList>
            <person name="Zieger B."/>
            <person name="Tran H."/>
            <person name="Hainmann I."/>
            <person name="Wunderle D."/>
            <person name="Zgaga-Griesz A."/>
            <person name="Blaeser S."/>
            <person name="Ware J."/>
        </authorList>
    </citation>
    <scope>NUCLEOTIDE SEQUENCE [MRNA] (ISOFORMS 1 AND 2)</scope>
    <scope>TISSUE SPECIFICITY</scope>
    <source>
        <tissue>Brain</tissue>
        <tissue>Fetal brain</tissue>
    </source>
</reference>
<reference key="3">
    <citation type="journal article" date="2000" name="Nat. Cell Biol.">
        <title>A novel mitochondrial septin-like protein, ARTS, mediates apoptosis dependent on its P-loop motif.</title>
        <authorList>
            <person name="Larisch S."/>
            <person name="Yi Y."/>
            <person name="Lotan R."/>
            <person name="Kerner H."/>
            <person name="Eimerl S."/>
            <person name="Parks W.T."/>
            <person name="Yossi G."/>
            <person name="Reffey S.B."/>
            <person name="de Caestecker M.P."/>
            <person name="Danielpour D."/>
            <person name="Book-Melamed N."/>
            <person name="Timberg R."/>
            <person name="Duckett C."/>
            <person name="Lechleider R.J."/>
            <person name="Steller H."/>
            <person name="Orly J."/>
            <person name="Kim S.-J."/>
            <person name="Roberts A.B."/>
        </authorList>
    </citation>
    <scope>NUCLEOTIDE SEQUENCE [MRNA] (ISOFORM ARTS)</scope>
    <scope>FUNCTION (ISOFORM ARTS)</scope>
    <scope>TISSUE SPECIFICITY (ISOFORM ARTS)</scope>
    <scope>SUBCELLULAR LOCATION (ISOFORM ARTS)</scope>
    <scope>MUTAGENESIS OF 156-GLY--SER-158 (ISOFORM ARTS)</scope>
    <source>
        <tissue>Fetal brain</tissue>
    </source>
</reference>
<reference key="4">
    <citation type="journal article" date="2001" name="Biochem. Biophys. Res. Commun.">
        <title>Characterization of tissue- and cell-type-specific expression of a novel human septin family gene, Bradeion.</title>
        <authorList>
            <person name="Tanaka M."/>
            <person name="Tanaka T."/>
            <person name="Kijima H."/>
            <person name="Itoh J."/>
            <person name="Matsuda T."/>
            <person name="Hori S."/>
            <person name="Yamamoto M."/>
        </authorList>
    </citation>
    <scope>NUCLEOTIDE SEQUENCE [MRNA] (ISOFORM 1)</scope>
    <scope>TISSUE SPECIFICITY</scope>
    <source>
        <tissue>Brain</tissue>
    </source>
</reference>
<reference key="5">
    <citation type="submission" date="1996-11" db="EMBL/GenBank/DDBJ databases">
        <title>Molecular cloning of a new GTP binding protein from human brain.</title>
        <authorList>
            <person name="Yoshimoto M."/>
            <person name="Yazaki M."/>
            <person name="Matsumoto K."/>
            <person name="Takayama K."/>
        </authorList>
    </citation>
    <scope>NUCLEOTIDE SEQUENCE [MRNA] (ISOFORM 1)</scope>
    <source>
        <tissue>Brain</tissue>
    </source>
</reference>
<reference key="6">
    <citation type="submission" date="1997-11" db="EMBL/GenBank/DDBJ databases">
        <authorList>
            <person name="Zha D."/>
            <person name="Hu G."/>
        </authorList>
    </citation>
    <scope>NUCLEOTIDE SEQUENCE [MRNA] (ISOFORM 1)</scope>
</reference>
<reference key="7">
    <citation type="submission" date="2004-06" db="EMBL/GenBank/DDBJ databases">
        <title>Cloning of human full open reading frames in Gateway(TM) system entry vector (pDONR201).</title>
        <authorList>
            <person name="Ebert L."/>
            <person name="Schick M."/>
            <person name="Neubert P."/>
            <person name="Schatten R."/>
            <person name="Henze S."/>
            <person name="Korn B."/>
        </authorList>
    </citation>
    <scope>NUCLEOTIDE SEQUENCE [LARGE SCALE MRNA] (ISOFORM 1)</scope>
</reference>
<reference key="8">
    <citation type="journal article" date="2004" name="Nat. Genet.">
        <title>Complete sequencing and characterization of 21,243 full-length human cDNAs.</title>
        <authorList>
            <person name="Ota T."/>
            <person name="Suzuki Y."/>
            <person name="Nishikawa T."/>
            <person name="Otsuki T."/>
            <person name="Sugiyama T."/>
            <person name="Irie R."/>
            <person name="Wakamatsu A."/>
            <person name="Hayashi K."/>
            <person name="Sato H."/>
            <person name="Nagai K."/>
            <person name="Kimura K."/>
            <person name="Makita H."/>
            <person name="Sekine M."/>
            <person name="Obayashi M."/>
            <person name="Nishi T."/>
            <person name="Shibahara T."/>
            <person name="Tanaka T."/>
            <person name="Ishii S."/>
            <person name="Yamamoto J."/>
            <person name="Saito K."/>
            <person name="Kawai Y."/>
            <person name="Isono Y."/>
            <person name="Nakamura Y."/>
            <person name="Nagahari K."/>
            <person name="Murakami K."/>
            <person name="Yasuda T."/>
            <person name="Iwayanagi T."/>
            <person name="Wagatsuma M."/>
            <person name="Shiratori A."/>
            <person name="Sudo H."/>
            <person name="Hosoiri T."/>
            <person name="Kaku Y."/>
            <person name="Kodaira H."/>
            <person name="Kondo H."/>
            <person name="Sugawara M."/>
            <person name="Takahashi M."/>
            <person name="Kanda K."/>
            <person name="Yokoi T."/>
            <person name="Furuya T."/>
            <person name="Kikkawa E."/>
            <person name="Omura Y."/>
            <person name="Abe K."/>
            <person name="Kamihara K."/>
            <person name="Katsuta N."/>
            <person name="Sato K."/>
            <person name="Tanikawa M."/>
            <person name="Yamazaki M."/>
            <person name="Ninomiya K."/>
            <person name="Ishibashi T."/>
            <person name="Yamashita H."/>
            <person name="Murakawa K."/>
            <person name="Fujimori K."/>
            <person name="Tanai H."/>
            <person name="Kimata M."/>
            <person name="Watanabe M."/>
            <person name="Hiraoka S."/>
            <person name="Chiba Y."/>
            <person name="Ishida S."/>
            <person name="Ono Y."/>
            <person name="Takiguchi S."/>
            <person name="Watanabe S."/>
            <person name="Yosida M."/>
            <person name="Hotuta T."/>
            <person name="Kusano J."/>
            <person name="Kanehori K."/>
            <person name="Takahashi-Fujii A."/>
            <person name="Hara H."/>
            <person name="Tanase T.-O."/>
            <person name="Nomura Y."/>
            <person name="Togiya S."/>
            <person name="Komai F."/>
            <person name="Hara R."/>
            <person name="Takeuchi K."/>
            <person name="Arita M."/>
            <person name="Imose N."/>
            <person name="Musashino K."/>
            <person name="Yuuki H."/>
            <person name="Oshima A."/>
            <person name="Sasaki N."/>
            <person name="Aotsuka S."/>
            <person name="Yoshikawa Y."/>
            <person name="Matsunawa H."/>
            <person name="Ichihara T."/>
            <person name="Shiohata N."/>
            <person name="Sano S."/>
            <person name="Moriya S."/>
            <person name="Momiyama H."/>
            <person name="Satoh N."/>
            <person name="Takami S."/>
            <person name="Terashima Y."/>
            <person name="Suzuki O."/>
            <person name="Nakagawa S."/>
            <person name="Senoh A."/>
            <person name="Mizoguchi H."/>
            <person name="Goto Y."/>
            <person name="Shimizu F."/>
            <person name="Wakebe H."/>
            <person name="Hishigaki H."/>
            <person name="Watanabe T."/>
            <person name="Sugiyama A."/>
            <person name="Takemoto M."/>
            <person name="Kawakami B."/>
            <person name="Yamazaki M."/>
            <person name="Watanabe K."/>
            <person name="Kumagai A."/>
            <person name="Itakura S."/>
            <person name="Fukuzumi Y."/>
            <person name="Fujimori Y."/>
            <person name="Komiyama M."/>
            <person name="Tashiro H."/>
            <person name="Tanigami A."/>
            <person name="Fujiwara T."/>
            <person name="Ono T."/>
            <person name="Yamada K."/>
            <person name="Fujii Y."/>
            <person name="Ozaki K."/>
            <person name="Hirao M."/>
            <person name="Ohmori Y."/>
            <person name="Kawabata A."/>
            <person name="Hikiji T."/>
            <person name="Kobatake N."/>
            <person name="Inagaki H."/>
            <person name="Ikema Y."/>
            <person name="Okamoto S."/>
            <person name="Okitani R."/>
            <person name="Kawakami T."/>
            <person name="Noguchi S."/>
            <person name="Itoh T."/>
            <person name="Shigeta K."/>
            <person name="Senba T."/>
            <person name="Matsumura K."/>
            <person name="Nakajima Y."/>
            <person name="Mizuno T."/>
            <person name="Morinaga M."/>
            <person name="Sasaki M."/>
            <person name="Togashi T."/>
            <person name="Oyama M."/>
            <person name="Hata H."/>
            <person name="Watanabe M."/>
            <person name="Komatsu T."/>
            <person name="Mizushima-Sugano J."/>
            <person name="Satoh T."/>
            <person name="Shirai Y."/>
            <person name="Takahashi Y."/>
            <person name="Nakagawa K."/>
            <person name="Okumura K."/>
            <person name="Nagase T."/>
            <person name="Nomura N."/>
            <person name="Kikuchi H."/>
            <person name="Masuho Y."/>
            <person name="Yamashita R."/>
            <person name="Nakai K."/>
            <person name="Yada T."/>
            <person name="Nakamura Y."/>
            <person name="Ohara O."/>
            <person name="Isogai T."/>
            <person name="Sugano S."/>
        </authorList>
    </citation>
    <scope>NUCLEOTIDE SEQUENCE [LARGE SCALE MRNA] (ISOFORMS 2; 3; 4; 5 AND 8)</scope>
    <source>
        <tissue>Amygdala</tissue>
        <tissue>Brain cortex</tissue>
        <tissue>Subthalamic nucleus</tissue>
        <tissue>Testis</tissue>
    </source>
</reference>
<reference key="9">
    <citation type="journal article" date="2006" name="Nature">
        <title>DNA sequence of human chromosome 17 and analysis of rearrangement in the human lineage.</title>
        <authorList>
            <person name="Zody M.C."/>
            <person name="Garber M."/>
            <person name="Adams D.J."/>
            <person name="Sharpe T."/>
            <person name="Harrow J."/>
            <person name="Lupski J.R."/>
            <person name="Nicholson C."/>
            <person name="Searle S.M."/>
            <person name="Wilming L."/>
            <person name="Young S.K."/>
            <person name="Abouelleil A."/>
            <person name="Allen N.R."/>
            <person name="Bi W."/>
            <person name="Bloom T."/>
            <person name="Borowsky M.L."/>
            <person name="Bugalter B.E."/>
            <person name="Butler J."/>
            <person name="Chang J.L."/>
            <person name="Chen C.-K."/>
            <person name="Cook A."/>
            <person name="Corum B."/>
            <person name="Cuomo C.A."/>
            <person name="de Jong P.J."/>
            <person name="DeCaprio D."/>
            <person name="Dewar K."/>
            <person name="FitzGerald M."/>
            <person name="Gilbert J."/>
            <person name="Gibson R."/>
            <person name="Gnerre S."/>
            <person name="Goldstein S."/>
            <person name="Grafham D.V."/>
            <person name="Grocock R."/>
            <person name="Hafez N."/>
            <person name="Hagopian D.S."/>
            <person name="Hart E."/>
            <person name="Norman C.H."/>
            <person name="Humphray S."/>
            <person name="Jaffe D.B."/>
            <person name="Jones M."/>
            <person name="Kamal M."/>
            <person name="Khodiyar V.K."/>
            <person name="LaButti K."/>
            <person name="Laird G."/>
            <person name="Lehoczky J."/>
            <person name="Liu X."/>
            <person name="Lokyitsang T."/>
            <person name="Loveland J."/>
            <person name="Lui A."/>
            <person name="Macdonald P."/>
            <person name="Major J.E."/>
            <person name="Matthews L."/>
            <person name="Mauceli E."/>
            <person name="McCarroll S.A."/>
            <person name="Mihalev A.H."/>
            <person name="Mudge J."/>
            <person name="Nguyen C."/>
            <person name="Nicol R."/>
            <person name="O'Leary S.B."/>
            <person name="Osoegawa K."/>
            <person name="Schwartz D.C."/>
            <person name="Shaw-Smith C."/>
            <person name="Stankiewicz P."/>
            <person name="Steward C."/>
            <person name="Swarbreck D."/>
            <person name="Venkataraman V."/>
            <person name="Whittaker C.A."/>
            <person name="Yang X."/>
            <person name="Zimmer A.R."/>
            <person name="Bradley A."/>
            <person name="Hubbard T."/>
            <person name="Birren B.W."/>
            <person name="Rogers J."/>
            <person name="Lander E.S."/>
            <person name="Nusbaum C."/>
        </authorList>
    </citation>
    <scope>NUCLEOTIDE SEQUENCE [LARGE SCALE GENOMIC DNA]</scope>
</reference>
<reference key="10">
    <citation type="submission" date="2005-09" db="EMBL/GenBank/DDBJ databases">
        <authorList>
            <person name="Mural R.J."/>
            <person name="Istrail S."/>
            <person name="Sutton G.G."/>
            <person name="Florea L."/>
            <person name="Halpern A.L."/>
            <person name="Mobarry C.M."/>
            <person name="Lippert R."/>
            <person name="Walenz B."/>
            <person name="Shatkay H."/>
            <person name="Dew I."/>
            <person name="Miller J.R."/>
            <person name="Flanigan M.J."/>
            <person name="Edwards N.J."/>
            <person name="Bolanos R."/>
            <person name="Fasulo D."/>
            <person name="Halldorsson B.V."/>
            <person name="Hannenhalli S."/>
            <person name="Turner R."/>
            <person name="Yooseph S."/>
            <person name="Lu F."/>
            <person name="Nusskern D.R."/>
            <person name="Shue B.C."/>
            <person name="Zheng X.H."/>
            <person name="Zhong F."/>
            <person name="Delcher A.L."/>
            <person name="Huson D.H."/>
            <person name="Kravitz S.A."/>
            <person name="Mouchard L."/>
            <person name="Reinert K."/>
            <person name="Remington K.A."/>
            <person name="Clark A.G."/>
            <person name="Waterman M.S."/>
            <person name="Eichler E.E."/>
            <person name="Adams M.D."/>
            <person name="Hunkapiller M.W."/>
            <person name="Myers E.W."/>
            <person name="Venter J.C."/>
        </authorList>
    </citation>
    <scope>NUCLEOTIDE SEQUENCE [LARGE SCALE GENOMIC DNA]</scope>
</reference>
<reference key="11">
    <citation type="journal article" date="2004" name="Genome Res.">
        <title>The status, quality, and expansion of the NIH full-length cDNA project: the Mammalian Gene Collection (MGC).</title>
        <authorList>
            <consortium name="The MGC Project Team"/>
        </authorList>
    </citation>
    <scope>NUCLEOTIDE SEQUENCE [LARGE SCALE MRNA] (ISOFORMS 2 AND 8)</scope>
    <source>
        <tissue>Hippocampus</tissue>
        <tissue>Testis</tissue>
    </source>
</reference>
<reference key="12">
    <citation type="journal article" date="2004" name="Thromb. Haemost.">
        <title>The novel human platelet septin SEPT8 is an interaction partner of SEPT4.</title>
        <authorList>
            <person name="Blaeser S."/>
            <person name="Horn J."/>
            <person name="Wuermell P."/>
            <person name="Bauer H."/>
            <person name="Struempell S."/>
            <person name="Nurden P."/>
            <person name="Pagenstecher A."/>
            <person name="Busse A."/>
            <person name="Wunderle D."/>
            <person name="Hainmann I."/>
            <person name="Zieger B."/>
        </authorList>
    </citation>
    <scope>INTERACTION WITH SEPTIN8</scope>
    <scope>SUBCELLULAR LOCATION</scope>
    <scope>TISSUE SPECIFICITY</scope>
</reference>
<reference key="13">
    <citation type="submission" date="2009-01" db="UniProtKB">
        <authorList>
            <person name="Lubec G."/>
            <person name="Chen W.-Q."/>
        </authorList>
    </citation>
    <scope>PROTEIN SEQUENCE OF 141-157 AND 282-290</scope>
    <scope>IDENTIFICATION BY MASS SPECTROMETRY</scope>
    <source>
        <tissue>Fetal brain</tissue>
    </source>
</reference>
<reference key="14">
    <citation type="journal article" date="2005" name="J. Biol. Chem.">
        <title>Regulation of the proapoptotic ARTS protein by ubiquitin-mediated degradation.</title>
        <authorList>
            <person name="Lotan R."/>
            <person name="Rotem A."/>
            <person name="Gonen H."/>
            <person name="Finberg J.P.M."/>
            <person name="Kemeny S."/>
            <person name="Steller H."/>
            <person name="Ciechanover A."/>
            <person name="Larisch S."/>
        </authorList>
    </citation>
    <scope>FUNCTION (ISOFORM ARTS)</scope>
</reference>
<reference key="15">
    <citation type="journal article" date="2005" name="J. Pathol.">
        <title>Expression profiling the human septin gene family.</title>
        <authorList>
            <person name="Hall P.A."/>
            <person name="Jung K."/>
            <person name="Hillan K.J."/>
            <person name="Russell S.E.H."/>
        </authorList>
    </citation>
    <scope>TISSUE SPECIFICITY</scope>
</reference>
<reference key="16">
    <citation type="journal article" date="2007" name="Neuron">
        <title>Sept4, a component of presynaptic scaffold and Lewy bodies, is required for the suppression of alpha-synuclein neurotoxicity.</title>
        <authorList>
            <person name="Ihara M."/>
            <person name="Yamasaki N."/>
            <person name="Hagiwara A."/>
            <person name="Tanigaki A."/>
            <person name="Kitano A."/>
            <person name="Hikawa R."/>
            <person name="Tomimoto H."/>
            <person name="Noda M."/>
            <person name="Takanashi M."/>
            <person name="Mori H."/>
            <person name="Hattori N."/>
            <person name="Miyakawa T."/>
            <person name="Kinoshita M."/>
        </authorList>
    </citation>
    <scope>SUBCELLULAR LOCATION</scope>
    <scope>TISSUE SPECIFICITY</scope>
</reference>
<reference key="17">
    <citation type="journal article" date="2008" name="Proteomics">
        <title>Large-scale phosphoproteome analysis of human liver tissue by enrichment and fractionation of phosphopeptides with strong anion exchange chromatography.</title>
        <authorList>
            <person name="Han G."/>
            <person name="Ye M."/>
            <person name="Zhou H."/>
            <person name="Jiang X."/>
            <person name="Feng S."/>
            <person name="Jiang X."/>
            <person name="Tian R."/>
            <person name="Wan D."/>
            <person name="Zou H."/>
            <person name="Gu J."/>
        </authorList>
    </citation>
    <scope>PHOSPHORYLATION [LARGE SCALE ANALYSIS] AT SER-325</scope>
    <scope>IDENTIFICATION BY MASS SPECTROMETRY [LARGE SCALE ANALYSIS]</scope>
    <source>
        <tissue>Liver</tissue>
    </source>
</reference>
<reference key="18">
    <citation type="journal article" date="2011" name="Apoptosis">
        <title>ARTS binds to a distinct domain in XIAP-BIR3 and promotes apoptosis by a mechanism that is different from other IAP-antagonists.</title>
        <authorList>
            <person name="Bornstein B."/>
            <person name="Gottfried Y."/>
            <person name="Edison N."/>
            <person name="Shekhtman A."/>
            <person name="Lev T."/>
            <person name="Glaser F."/>
            <person name="Larisch S."/>
        </authorList>
    </citation>
    <scope>INTERACTION WITH XIAP</scope>
    <scope>SUBCELLULAR LOCATION</scope>
</reference>
<reference key="19">
    <citation type="journal article" date="2014" name="J. Proteomics">
        <title>An enzyme assisted RP-RPLC approach for in-depth analysis of human liver phosphoproteome.</title>
        <authorList>
            <person name="Bian Y."/>
            <person name="Song C."/>
            <person name="Cheng K."/>
            <person name="Dong M."/>
            <person name="Wang F."/>
            <person name="Huang J."/>
            <person name="Sun D."/>
            <person name="Wang L."/>
            <person name="Ye M."/>
            <person name="Zou H."/>
        </authorList>
    </citation>
    <scope>PHOSPHORYLATION [LARGE SCALE ANALYSIS] AT SER-117; SER-118 AND SER-325</scope>
    <scope>IDENTIFICATION BY MASS SPECTROMETRY [LARGE SCALE ANALYSIS]</scope>
    <source>
        <tissue>Liver</tissue>
    </source>
</reference>
<reference key="20">
    <citation type="journal article" date="2007" name="Hum. Mutat.">
        <title>SEPT9 sequence alternations causing hereditary neuralgic amyotrophy are associated with altered interactions with SEPT4/SEPT11 and resistance to Rho/Rhotekin-signaling.</title>
        <authorList>
            <person name="Sudo K."/>
            <person name="Ito H."/>
            <person name="Iwamoto I."/>
            <person name="Morishita R."/>
            <person name="Asano T."/>
            <person name="Nagata K."/>
        </authorList>
    </citation>
    <scope>INTERACTION WITH SEPTIN9 HNA VARIANTS</scope>
</reference>
<reference key="21">
    <citation type="journal article" date="2004" name="EMBO J.">
        <title>The mitochondrial ARTS protein promotes apoptosis through targeting XIAP.</title>
        <authorList>
            <person name="Gottfried Y."/>
            <person name="Rotem A."/>
            <person name="Lotan R."/>
            <person name="Steller H."/>
            <person name="Larisch S."/>
        </authorList>
    </citation>
    <scope>FUNCTION (ISOFORM ARTS)</scope>
    <scope>SUBCELLULAR LOCATION (ISOFORM ARTS)</scope>
    <scope>INTERACTION WITH XIAP (ISOFORM ARTS)</scope>
    <scope>MUTAGENESIS OF 156-GLY--SER-158 (ISOFORM ARTS)</scope>
</reference>
<reference key="22">
    <citation type="journal article" date="2013" name="J. Biol. Chem.">
        <title>Identification of a novel anti-apoptotic E3 ubiquitin ligase that ubiquitinates antagonists of inhibitor of apoptosis proteins SMAC, HtrA2, and ARTS.</title>
        <authorList>
            <person name="Kim J.B."/>
            <person name="Kim S.Y."/>
            <person name="Kim B.M."/>
            <person name="Lee H."/>
            <person name="Kim I."/>
            <person name="Yun J."/>
            <person name="Jo Y."/>
            <person name="Oh T."/>
            <person name="Jo Y."/>
            <person name="Chae H.D."/>
            <person name="Shin D.Y."/>
        </authorList>
    </citation>
    <scope>INTERACTION WITH AREL1</scope>
    <scope>UBIQUITINATION</scope>
</reference>
<reference key="23">
    <citation type="journal article" date="2015" name="J. Cell Sci.">
        <title>SEPT12 orchestrates the formation of mammalian sperm annulus by organizing core octomeric complexes with other SEPT proteins.</title>
        <authorList>
            <person name="Kuo Y.C."/>
            <person name="Shen Y.R."/>
            <person name="Chen H.I."/>
            <person name="Lin Y.H."/>
            <person name="Wang Y.Y."/>
            <person name="Chen Y.R."/>
            <person name="Wang C.Y."/>
            <person name="Kuo P.L."/>
        </authorList>
    </citation>
    <scope>SUBUNIT</scope>
    <scope>SUBCELLULAR LOCATION</scope>
</reference>
<reference key="24">
    <citation type="journal article" date="2017" name="Cell Rep.">
        <title>Degradation of Bcl-2 by XIAP and ARTS Promotes Apoptosis.</title>
        <authorList>
            <person name="Edison N."/>
            <person name="Curtz Y."/>
            <person name="Paland N."/>
            <person name="Mamriev D."/>
            <person name="Chorubczyk N."/>
            <person name="Haviv-Reingewertz T."/>
            <person name="Kfir N."/>
            <person name="Morgenstern D."/>
            <person name="Kupervaser M."/>
            <person name="Kagan J."/>
            <person name="Kim H.T."/>
            <person name="Larisch S."/>
        </authorList>
    </citation>
    <scope>FUNCTION</scope>
    <scope>IDENTIFICATION IN A COMPLEX WITH BCL2 AND XIAP</scope>
    <scope>INTERACTION WITH BCL2 AND XIAP</scope>
</reference>
<reference key="25">
    <citation type="journal article" date="2018" name="Nat. Commun.">
        <title>ARTS mediates apoptosis and regeneration of the intestinal stem cell niche.</title>
        <authorList>
            <person name="Koren E."/>
            <person name="Yosefzon Y."/>
            <person name="Ankawa R."/>
            <person name="Soteriou D."/>
            <person name="Jacob A."/>
            <person name="Nevelsky A."/>
            <person name="Ben-Yosef R."/>
            <person name="Bar-Sela G."/>
            <person name="Fuchs Y."/>
        </authorList>
    </citation>
    <scope>TISSUE SPECIFICITY</scope>
</reference>
<accession>O43236</accession>
<accession>A0A5F9ZHH3</accession>
<accession>B2RD42</accession>
<accession>B3KSX9</accession>
<accession>B4DXC6</accession>
<accession>B4DXV5</accession>
<accession>Q6IAP3</accession>
<accession>Q8N821</accession>
<accession>Q8NEP4</accession>
<accession>Q9H315</accession>
<accession>Q9UM58</accession>
<keyword id="KW-0002">3D-structure</keyword>
<keyword id="KW-0025">Alternative splicing</keyword>
<keyword id="KW-0131">Cell cycle</keyword>
<keyword id="KW-0132">Cell division</keyword>
<keyword id="KW-0966">Cell projection</keyword>
<keyword id="KW-0969">Cilium</keyword>
<keyword id="KW-0175">Coiled coil</keyword>
<keyword id="KW-0963">Cytoplasm</keyword>
<keyword id="KW-0968">Cytoplasmic vesicle</keyword>
<keyword id="KW-0221">Differentiation</keyword>
<keyword id="KW-0903">Direct protein sequencing</keyword>
<keyword id="KW-0282">Flagellum</keyword>
<keyword id="KW-0342">GTP-binding</keyword>
<keyword id="KW-0496">Mitochondrion</keyword>
<keyword id="KW-0547">Nucleotide-binding</keyword>
<keyword id="KW-0539">Nucleus</keyword>
<keyword id="KW-0597">Phosphoprotein</keyword>
<keyword id="KW-1267">Proteomics identification</keyword>
<keyword id="KW-1185">Reference proteome</keyword>
<keyword id="KW-0744">Spermatogenesis</keyword>
<keyword id="KW-0770">Synapse</keyword>
<keyword id="KW-0832">Ubl conjugation</keyword>
<sequence length="478" mass="55098">MDRSLGWQGNSVPEDRTEAGIKRFLEDTTDDGELSKFVKDFSGNASCHPPEAKTWASRPQVPEPRPQAPDLYDDDLEFRPPSRPQSSDNQQYFCAPAPLSPSARPRSPWGKLDPYDSSEDDKEYVGFATLPNQVHRKSVKKGFDFTLMVAGESGLGKSTLVNSLFLTDLYRDRKLLGAEERIMQTVEITKHAVDIEEKGVRLRLTIVDTPGFGDAVNNTECWKPVAEYIDQQFEQYFRDESGLNRKNIQDNRVHCCLYFISPFGHGLRPLDVEFMKALHQRVNIVPILAKADTLTPPEVDHKKRKIREEIEHFGIKIYQFPDCDSDEDEDFKLQDQALKESIPFAVIGSNTVVEARGRRVRGRLYPWGIVEVENPGHCDFVKLRTMLVRTHMQDLKDVTRETHYENYRAQCIQSMTRLVVKERNRNKLTRESGTDFPIPAVPPGTDPETEKLIREKDEELRRMQEMLHKIQKQMKENY</sequence>
<organism>
    <name type="scientific">Homo sapiens</name>
    <name type="common">Human</name>
    <dbReference type="NCBI Taxonomy" id="9606"/>
    <lineage>
        <taxon>Eukaryota</taxon>
        <taxon>Metazoa</taxon>
        <taxon>Chordata</taxon>
        <taxon>Craniata</taxon>
        <taxon>Vertebrata</taxon>
        <taxon>Euteleostomi</taxon>
        <taxon>Mammalia</taxon>
        <taxon>Eutheria</taxon>
        <taxon>Euarchontoglires</taxon>
        <taxon>Primates</taxon>
        <taxon>Haplorrhini</taxon>
        <taxon>Catarrhini</taxon>
        <taxon>Hominidae</taxon>
        <taxon>Homo</taxon>
    </lineage>
</organism>
<gene>
    <name evidence="30" type="primary">SEPTIN4</name>
    <name evidence="30" type="synonym">C17orf47</name>
    <name evidence="28" type="synonym">PNUTL2</name>
    <name evidence="30" type="synonym">SEP4</name>
    <name evidence="30" type="synonym">SEPT4</name>
    <name type="ORF">hucep-7</name>
</gene>
<protein>
    <recommendedName>
        <fullName evidence="30">Septin-4</fullName>
    </recommendedName>
    <alternativeName>
        <fullName evidence="25">Bradeion beta</fullName>
    </alternativeName>
    <alternativeName>
        <fullName evidence="1">Brain protein H5</fullName>
    </alternativeName>
    <alternativeName>
        <fullName evidence="30">CE5B3 beta</fullName>
    </alternativeName>
    <alternativeName>
        <fullName evidence="30">Cell division control-related protein 2</fullName>
        <shortName evidence="30">hCDCREL-2</shortName>
    </alternativeName>
    <alternativeName>
        <fullName evidence="28">Peanut-like protein 2</fullName>
    </alternativeName>
</protein>
<name>SEPT4_HUMAN</name>
<dbReference type="EMBL" id="AF073312">
    <property type="protein sequence ID" value="AAC25673.1"/>
    <property type="molecule type" value="mRNA"/>
</dbReference>
<dbReference type="EMBL" id="U88829">
    <property type="protein sequence ID" value="AAD00653.1"/>
    <property type="molecule type" value="mRNA"/>
</dbReference>
<dbReference type="EMBL" id="U88870">
    <property type="protein sequence ID" value="AAD00657.1"/>
    <property type="molecule type" value="mRNA"/>
</dbReference>
<dbReference type="EMBL" id="AF176379">
    <property type="protein sequence ID" value="AAG45673.1"/>
    <property type="molecule type" value="mRNA"/>
</dbReference>
<dbReference type="EMBL" id="AB008753">
    <property type="protein sequence ID" value="BAB70695.1"/>
    <property type="molecule type" value="mRNA"/>
</dbReference>
<dbReference type="EMBL" id="D89278">
    <property type="protein sequence ID" value="BAB46922.1"/>
    <property type="molecule type" value="mRNA"/>
</dbReference>
<dbReference type="EMBL" id="AF035811">
    <property type="protein sequence ID" value="AAB88512.1"/>
    <property type="molecule type" value="mRNA"/>
</dbReference>
<dbReference type="EMBL" id="CR457111">
    <property type="protein sequence ID" value="CAG33392.1"/>
    <property type="molecule type" value="mRNA"/>
</dbReference>
<dbReference type="EMBL" id="AK315396">
    <property type="protein sequence ID" value="BAG37789.1"/>
    <property type="molecule type" value="mRNA"/>
</dbReference>
<dbReference type="EMBL" id="AK094579">
    <property type="protein sequence ID" value="BAG52891.1"/>
    <property type="molecule type" value="mRNA"/>
</dbReference>
<dbReference type="EMBL" id="AK294094">
    <property type="protein sequence ID" value="BAG57432.1"/>
    <property type="molecule type" value="mRNA"/>
</dbReference>
<dbReference type="EMBL" id="AK301914">
    <property type="protein sequence ID" value="BAG63338.1"/>
    <property type="molecule type" value="mRNA"/>
</dbReference>
<dbReference type="EMBL" id="AK302146">
    <property type="protein sequence ID" value="BAG63517.1"/>
    <property type="molecule type" value="mRNA"/>
</dbReference>
<dbReference type="EMBL" id="AK097440">
    <property type="protein sequence ID" value="BAC05054.1"/>
    <property type="molecule type" value="mRNA"/>
</dbReference>
<dbReference type="EMBL" id="AC005666">
    <property type="status" value="NOT_ANNOTATED_CDS"/>
    <property type="molecule type" value="Genomic_DNA"/>
</dbReference>
<dbReference type="EMBL" id="CH471109">
    <property type="protein sequence ID" value="EAW94440.1"/>
    <property type="molecule type" value="Genomic_DNA"/>
</dbReference>
<dbReference type="EMBL" id="CH471109">
    <property type="protein sequence ID" value="EAW94442.1"/>
    <property type="molecule type" value="Genomic_DNA"/>
</dbReference>
<dbReference type="EMBL" id="BC018056">
    <property type="protein sequence ID" value="AAH18056.3"/>
    <property type="molecule type" value="mRNA"/>
</dbReference>
<dbReference type="EMBL" id="BC022189">
    <property type="protein sequence ID" value="AAH22189.2"/>
    <property type="molecule type" value="mRNA"/>
</dbReference>
<dbReference type="CCDS" id="CCDS11609.1">
    <molecule id="O43236-2"/>
</dbReference>
<dbReference type="CCDS" id="CCDS11610.1">
    <molecule id="O43236-1"/>
</dbReference>
<dbReference type="CCDS" id="CCDS32691.1">
    <molecule id="O43236-8"/>
</dbReference>
<dbReference type="CCDS" id="CCDS45743.1">
    <molecule id="O43236-6"/>
</dbReference>
<dbReference type="CCDS" id="CCDS56041.1">
    <molecule id="O43236-3"/>
</dbReference>
<dbReference type="CCDS" id="CCDS58581.1">
    <molecule id="O43236-5"/>
</dbReference>
<dbReference type="CCDS" id="CCDS58582.1">
    <molecule id="O43236-4"/>
</dbReference>
<dbReference type="CCDS" id="CCDS92368.1">
    <molecule id="O43236-7"/>
</dbReference>
<dbReference type="RefSeq" id="NP_001033793.3">
    <molecule id="O43236-8"/>
    <property type="nucleotide sequence ID" value="NM_001038704.4"/>
</dbReference>
<dbReference type="RefSeq" id="NP_001185642.1">
    <molecule id="O43236-3"/>
    <property type="nucleotide sequence ID" value="NM_001198713.2"/>
</dbReference>
<dbReference type="RefSeq" id="NP_001243711.1">
    <molecule id="O43236-4"/>
    <property type="nucleotide sequence ID" value="NM_001256782.2"/>
</dbReference>
<dbReference type="RefSeq" id="NP_001243751.1">
    <molecule id="O43236-5"/>
    <property type="nucleotide sequence ID" value="NM_001256822.2"/>
</dbReference>
<dbReference type="RefSeq" id="NP_001355700.1">
    <molecule id="O43236-7"/>
    <property type="nucleotide sequence ID" value="NM_001368771.2"/>
</dbReference>
<dbReference type="RefSeq" id="NP_004565.1">
    <molecule id="O43236-1"/>
    <property type="nucleotide sequence ID" value="NM_004574.5"/>
</dbReference>
<dbReference type="RefSeq" id="NP_536340.1">
    <molecule id="O43236-6"/>
    <property type="nucleotide sequence ID" value="NM_080415.4"/>
</dbReference>
<dbReference type="RefSeq" id="NP_536341.1">
    <molecule id="O43236-2"/>
    <property type="nucleotide sequence ID" value="NM_080416.4"/>
</dbReference>
<dbReference type="RefSeq" id="XP_006722017.1">
    <property type="nucleotide sequence ID" value="XM_006721954.2"/>
</dbReference>
<dbReference type="RefSeq" id="XP_006722018.1">
    <molecule id="O43236-5"/>
    <property type="nucleotide sequence ID" value="XM_006721955.4"/>
</dbReference>
<dbReference type="RefSeq" id="XP_011523213.1">
    <property type="nucleotide sequence ID" value="XM_011524911.1"/>
</dbReference>
<dbReference type="RefSeq" id="XP_011523214.1">
    <molecule id="O43236-5"/>
    <property type="nucleotide sequence ID" value="XM_011524912.3"/>
</dbReference>
<dbReference type="RefSeq" id="XP_024306576.1">
    <molecule id="O43236-5"/>
    <property type="nucleotide sequence ID" value="XM_024450808.2"/>
</dbReference>
<dbReference type="RefSeq" id="XP_047292265.1">
    <molecule id="O43236-4"/>
    <property type="nucleotide sequence ID" value="XM_047436309.1"/>
</dbReference>
<dbReference type="RefSeq" id="XP_054172497.1">
    <molecule id="O43236-4"/>
    <property type="nucleotide sequence ID" value="XM_054316522.1"/>
</dbReference>
<dbReference type="RefSeq" id="XP_054172501.1">
    <molecule id="O43236-5"/>
    <property type="nucleotide sequence ID" value="XM_054316526.1"/>
</dbReference>
<dbReference type="RefSeq" id="XP_054172502.1">
    <molecule id="O43236-5"/>
    <property type="nucleotide sequence ID" value="XM_054316527.1"/>
</dbReference>
<dbReference type="RefSeq" id="XP_054172503.1">
    <molecule id="O43236-5"/>
    <property type="nucleotide sequence ID" value="XM_054316528.1"/>
</dbReference>
<dbReference type="PDB" id="6WB3">
    <property type="method" value="X-ray"/>
    <property type="resolution" value="1.35 A"/>
    <property type="chains" value="A/B=448-477"/>
</dbReference>
<dbReference type="PDBsum" id="6WB3"/>
<dbReference type="SMR" id="O43236"/>
<dbReference type="BioGRID" id="111415">
    <property type="interactions" value="27"/>
</dbReference>
<dbReference type="BioGRID" id="129753">
    <property type="interactions" value="3"/>
</dbReference>
<dbReference type="FunCoup" id="O43236">
    <property type="interactions" value="359"/>
</dbReference>
<dbReference type="IntAct" id="O43236">
    <property type="interactions" value="26"/>
</dbReference>
<dbReference type="MINT" id="O43236"/>
<dbReference type="STRING" id="9606.ENSP00000354874"/>
<dbReference type="iPTMnet" id="O43236"/>
<dbReference type="PhosphoSitePlus" id="O43236"/>
<dbReference type="SwissPalm" id="O43236"/>
<dbReference type="BioMuta" id="C17orf47"/>
<dbReference type="BioMuta" id="SEPT4"/>
<dbReference type="DMDM" id="300669697"/>
<dbReference type="jPOST" id="O43236"/>
<dbReference type="MassIVE" id="O43236"/>
<dbReference type="PaxDb" id="9606-ENSP00000402000"/>
<dbReference type="PeptideAtlas" id="O43236"/>
<dbReference type="ProteomicsDB" id="48814">
    <molecule id="O43236-1"/>
</dbReference>
<dbReference type="ProteomicsDB" id="48815">
    <molecule id="O43236-2"/>
</dbReference>
<dbReference type="ProteomicsDB" id="48816">
    <molecule id="O43236-3"/>
</dbReference>
<dbReference type="ProteomicsDB" id="48817">
    <molecule id="O43236-4"/>
</dbReference>
<dbReference type="ProteomicsDB" id="48818">
    <molecule id="O43236-5"/>
</dbReference>
<dbReference type="ProteomicsDB" id="48819">
    <molecule id="O43236-6"/>
</dbReference>
<dbReference type="ProteomicsDB" id="73193"/>
<dbReference type="Antibodypedia" id="3484">
    <property type="antibodies" value="275 antibodies from 37 providers"/>
</dbReference>
<dbReference type="DNASU" id="284083"/>
<dbReference type="DNASU" id="5414"/>
<dbReference type="Ensembl" id="ENST00000317256.10">
    <molecule id="O43236-2"/>
    <property type="protein sequence ID" value="ENSP00000321071.6"/>
    <property type="gene ID" value="ENSG00000108387.16"/>
</dbReference>
<dbReference type="Ensembl" id="ENST00000317268.7">
    <molecule id="O43236-1"/>
    <property type="protein sequence ID" value="ENSP00000321674.3"/>
    <property type="gene ID" value="ENSG00000108387.16"/>
</dbReference>
<dbReference type="Ensembl" id="ENST00000321691.3">
    <molecule id="O43236-8"/>
    <property type="protein sequence ID" value="ENSP00000354874.2"/>
    <property type="gene ID" value="ENSG00000108387.16"/>
</dbReference>
<dbReference type="Ensembl" id="ENST00000393086.5">
    <molecule id="O43236-2"/>
    <property type="protein sequence ID" value="ENSP00000376801.1"/>
    <property type="gene ID" value="ENSG00000108387.16"/>
</dbReference>
<dbReference type="Ensembl" id="ENST00000412945.7">
    <molecule id="O43236-3"/>
    <property type="protein sequence ID" value="ENSP00000414779.3"/>
    <property type="gene ID" value="ENSG00000108387.16"/>
</dbReference>
<dbReference type="Ensembl" id="ENST00000426861.5">
    <molecule id="O43236-6"/>
    <property type="protein sequence ID" value="ENSP00000402348.1"/>
    <property type="gene ID" value="ENSG00000108387.16"/>
</dbReference>
<dbReference type="Ensembl" id="ENST00000457347.6">
    <molecule id="O43236-4"/>
    <property type="protein sequence ID" value="ENSP00000402000.2"/>
    <property type="gene ID" value="ENSG00000108387.16"/>
</dbReference>
<dbReference type="Ensembl" id="ENST00000583114.5">
    <molecule id="O43236-5"/>
    <property type="protein sequence ID" value="ENSP00000463768.1"/>
    <property type="gene ID" value="ENSG00000108387.16"/>
</dbReference>
<dbReference type="Ensembl" id="ENST00000672673.2">
    <molecule id="O43236-7"/>
    <property type="protein sequence ID" value="ENSP00000500383.1"/>
    <property type="gene ID" value="ENSG00000108387.16"/>
</dbReference>
<dbReference type="Ensembl" id="ENST00000672699.1">
    <molecule id="O43236-4"/>
    <property type="protein sequence ID" value="ENSP00000500355.1"/>
    <property type="gene ID" value="ENSG00000108387.16"/>
</dbReference>
<dbReference type="GeneID" id="5414"/>
<dbReference type="KEGG" id="hsa:5414"/>
<dbReference type="MANE-Select" id="ENST00000672673.2">
    <molecule id="O43236-7"/>
    <property type="protein sequence ID" value="ENSP00000500383.1"/>
    <property type="RefSeq nucleotide sequence ID" value="NM_001368771.2"/>
    <property type="RefSeq protein sequence ID" value="NP_001355700.1"/>
</dbReference>
<dbReference type="UCSC" id="uc002iwm.4">
    <molecule id="O43236-1"/>
    <property type="organism name" value="human"/>
</dbReference>
<dbReference type="AGR" id="HGNC:9165"/>
<dbReference type="CTD" id="5414"/>
<dbReference type="DisGeNET" id="5414"/>
<dbReference type="GeneCards" id="SEPTIN4"/>
<dbReference type="HGNC" id="HGNC:9165">
    <property type="gene designation" value="SEPTIN4"/>
</dbReference>
<dbReference type="HPA" id="ENSG00000108387">
    <property type="expression patterns" value="Group enriched (brain, retina)"/>
</dbReference>
<dbReference type="MalaCards" id="SEPTIN4"/>
<dbReference type="MIM" id="603696">
    <property type="type" value="gene"/>
</dbReference>
<dbReference type="neXtProt" id="NX_O43236"/>
<dbReference type="OpenTargets" id="ENSG00000108387"/>
<dbReference type="Orphanet" id="171709">
    <property type="disease" value="Male infertility due to globozoospermia"/>
</dbReference>
<dbReference type="PharmGKB" id="PA33487"/>
<dbReference type="VEuPathDB" id="HostDB:ENSG00000108387"/>
<dbReference type="eggNOG" id="ENOG502SETZ">
    <property type="taxonomic scope" value="Eukaryota"/>
</dbReference>
<dbReference type="eggNOG" id="KOG2655">
    <property type="taxonomic scope" value="Eukaryota"/>
</dbReference>
<dbReference type="GeneTree" id="ENSGT00390000018146"/>
<dbReference type="HOGENOM" id="CLU_575631_0_0_1"/>
<dbReference type="InParanoid" id="O43236"/>
<dbReference type="OMA" id="SSICTEP"/>
<dbReference type="OrthoDB" id="416553at2759"/>
<dbReference type="PAN-GO" id="O43236">
    <property type="GO annotations" value="11 GO annotations based on evolutionary models"/>
</dbReference>
<dbReference type="PhylomeDB" id="O43236"/>
<dbReference type="TreeFam" id="TF101079"/>
<dbReference type="TreeFam" id="TF338016"/>
<dbReference type="PathwayCommons" id="O43236"/>
<dbReference type="Reactome" id="R-HSA-111457">
    <molecule id="O43236-6"/>
    <property type="pathway name" value="Release of apoptotic factors from the mitochondria"/>
</dbReference>
<dbReference type="Reactome" id="R-HSA-111469">
    <molecule id="O43236-6"/>
    <property type="pathway name" value="SMAC, XIAP-regulated apoptotic response"/>
</dbReference>
<dbReference type="SignaLink" id="O43236"/>
<dbReference type="SIGNOR" id="O43236"/>
<dbReference type="BioGRID-ORCS" id="284083">
    <property type="hits" value="14 hits in 1105 CRISPR screens"/>
</dbReference>
<dbReference type="BioGRID-ORCS" id="5414">
    <property type="hits" value="9 hits in 1084 CRISPR screens"/>
</dbReference>
<dbReference type="CD-CODE" id="FB4E32DD">
    <property type="entry name" value="Presynaptic clusters and postsynaptic densities"/>
</dbReference>
<dbReference type="ChiTaRS" id="SEPT4">
    <property type="organism name" value="human"/>
</dbReference>
<dbReference type="GeneWiki" id="SEPT4"/>
<dbReference type="GenomeRNAi" id="5414"/>
<dbReference type="Pharos" id="O43236">
    <property type="development level" value="Tbio"/>
</dbReference>
<dbReference type="PRO" id="PR:Q8NEP4"/>
<dbReference type="Proteomes" id="UP000005640">
    <property type="component" value="Chromosome 17"/>
</dbReference>
<dbReference type="RNAct" id="O43236">
    <property type="molecule type" value="protein"/>
</dbReference>
<dbReference type="Bgee" id="ENSG00000108387">
    <property type="expression patterns" value="Expressed in C1 segment of cervical spinal cord and 149 other cell types or tissues"/>
</dbReference>
<dbReference type="ExpressionAtlas" id="O43236">
    <property type="expression patterns" value="baseline and differential"/>
</dbReference>
<dbReference type="GO" id="GO:0030424">
    <property type="term" value="C:axon"/>
    <property type="evidence" value="ECO:0000250"/>
    <property type="project" value="UniProtKB"/>
</dbReference>
<dbReference type="GO" id="GO:0032153">
    <property type="term" value="C:cell division site"/>
    <property type="evidence" value="ECO:0000318"/>
    <property type="project" value="GO_Central"/>
</dbReference>
<dbReference type="GO" id="GO:0005829">
    <property type="term" value="C:cytosol"/>
    <property type="evidence" value="ECO:0000304"/>
    <property type="project" value="Reactome"/>
</dbReference>
<dbReference type="GO" id="GO:0030425">
    <property type="term" value="C:dendrite"/>
    <property type="evidence" value="ECO:0000250"/>
    <property type="project" value="UniProtKB"/>
</dbReference>
<dbReference type="GO" id="GO:0098691">
    <property type="term" value="C:dopaminergic synapse"/>
    <property type="evidence" value="ECO:0000314"/>
    <property type="project" value="SynGO"/>
</dbReference>
<dbReference type="GO" id="GO:0015630">
    <property type="term" value="C:microtubule cytoskeleton"/>
    <property type="evidence" value="ECO:0000318"/>
    <property type="project" value="GO_Central"/>
</dbReference>
<dbReference type="GO" id="GO:0005741">
    <property type="term" value="C:mitochondrial outer membrane"/>
    <property type="evidence" value="ECO:0000304"/>
    <property type="project" value="Reactome"/>
</dbReference>
<dbReference type="GO" id="GO:0005739">
    <property type="term" value="C:mitochondrion"/>
    <property type="evidence" value="ECO:0000314"/>
    <property type="project" value="UniProtKB"/>
</dbReference>
<dbReference type="GO" id="GO:0005634">
    <property type="term" value="C:nucleus"/>
    <property type="evidence" value="ECO:0000303"/>
    <property type="project" value="UniProtKB"/>
</dbReference>
<dbReference type="GO" id="GO:0043204">
    <property type="term" value="C:perikaryon"/>
    <property type="evidence" value="ECO:0000250"/>
    <property type="project" value="UniProtKB"/>
</dbReference>
<dbReference type="GO" id="GO:0098793">
    <property type="term" value="C:presynapse"/>
    <property type="evidence" value="ECO:0000314"/>
    <property type="project" value="SynGO"/>
</dbReference>
<dbReference type="GO" id="GO:0031105">
    <property type="term" value="C:septin complex"/>
    <property type="evidence" value="ECO:0000314"/>
    <property type="project" value="UniProtKB"/>
</dbReference>
<dbReference type="GO" id="GO:0005940">
    <property type="term" value="C:septin ring"/>
    <property type="evidence" value="ECO:0000318"/>
    <property type="project" value="GO_Central"/>
</dbReference>
<dbReference type="GO" id="GO:0097227">
    <property type="term" value="C:sperm annulus"/>
    <property type="evidence" value="ECO:0000314"/>
    <property type="project" value="UniProtKB"/>
</dbReference>
<dbReference type="GO" id="GO:0008021">
    <property type="term" value="C:synaptic vesicle"/>
    <property type="evidence" value="ECO:0000318"/>
    <property type="project" value="GO_Central"/>
</dbReference>
<dbReference type="GO" id="GO:0005525">
    <property type="term" value="F:GTP binding"/>
    <property type="evidence" value="ECO:0000315"/>
    <property type="project" value="CAFA"/>
</dbReference>
<dbReference type="GO" id="GO:0003924">
    <property type="term" value="F:GTPase activity"/>
    <property type="evidence" value="ECO:0000315"/>
    <property type="project" value="CAFA"/>
</dbReference>
<dbReference type="GO" id="GO:0042802">
    <property type="term" value="F:identical protein binding"/>
    <property type="evidence" value="ECO:0000353"/>
    <property type="project" value="CAFA"/>
</dbReference>
<dbReference type="GO" id="GO:0000287">
    <property type="term" value="F:magnesium ion binding"/>
    <property type="evidence" value="ECO:0000315"/>
    <property type="project" value="CAFA"/>
</dbReference>
<dbReference type="GO" id="GO:0060090">
    <property type="term" value="F:molecular adaptor activity"/>
    <property type="evidence" value="ECO:0000318"/>
    <property type="project" value="GO_Central"/>
</dbReference>
<dbReference type="GO" id="GO:0005198">
    <property type="term" value="F:structural molecule activity"/>
    <property type="evidence" value="ECO:0000304"/>
    <property type="project" value="ProtInc"/>
</dbReference>
<dbReference type="GO" id="GO:0006915">
    <property type="term" value="P:apoptotic process"/>
    <property type="evidence" value="ECO:0000303"/>
    <property type="project" value="UniProtKB"/>
</dbReference>
<dbReference type="GO" id="GO:0061640">
    <property type="term" value="P:cytoskeleton-dependent cytokinesis"/>
    <property type="evidence" value="ECO:0000318"/>
    <property type="project" value="GO_Central"/>
</dbReference>
<dbReference type="GO" id="GO:0030317">
    <property type="term" value="P:flagellated sperm motility"/>
    <property type="evidence" value="ECO:0000250"/>
    <property type="project" value="UniProtKB"/>
</dbReference>
<dbReference type="GO" id="GO:0061484">
    <property type="term" value="P:hematopoietic stem cell homeostasis"/>
    <property type="evidence" value="ECO:0000250"/>
    <property type="project" value="UniProtKB"/>
</dbReference>
<dbReference type="GO" id="GO:0001764">
    <property type="term" value="P:neuron migration"/>
    <property type="evidence" value="ECO:0000250"/>
    <property type="project" value="UniProtKB"/>
</dbReference>
<dbReference type="GO" id="GO:0043065">
    <property type="term" value="P:positive regulation of apoptotic process"/>
    <property type="evidence" value="ECO:0000314"/>
    <property type="project" value="UniProtKB"/>
</dbReference>
<dbReference type="GO" id="GO:2001244">
    <property type="term" value="P:positive regulation of intrinsic apoptotic signaling pathway"/>
    <property type="evidence" value="ECO:0000315"/>
    <property type="project" value="UniProtKB"/>
</dbReference>
<dbReference type="GO" id="GO:0031398">
    <property type="term" value="P:positive regulation of protein ubiquitination"/>
    <property type="evidence" value="ECO:0000314"/>
    <property type="project" value="UniProtKB"/>
</dbReference>
<dbReference type="GO" id="GO:0008104">
    <property type="term" value="P:protein localization"/>
    <property type="evidence" value="ECO:0000318"/>
    <property type="project" value="GO_Central"/>
</dbReference>
<dbReference type="GO" id="GO:0042981">
    <property type="term" value="P:regulation of apoptotic process"/>
    <property type="evidence" value="ECO:0000303"/>
    <property type="project" value="UniProtKB"/>
</dbReference>
<dbReference type="GO" id="GO:0017157">
    <property type="term" value="P:regulation of exocytosis"/>
    <property type="evidence" value="ECO:0000318"/>
    <property type="project" value="GO_Central"/>
</dbReference>
<dbReference type="GO" id="GO:0048515">
    <property type="term" value="P:spermatid differentiation"/>
    <property type="evidence" value="ECO:0000250"/>
    <property type="project" value="UniProtKB"/>
</dbReference>
<dbReference type="CDD" id="cd01850">
    <property type="entry name" value="CDC_Septin"/>
    <property type="match status" value="1"/>
</dbReference>
<dbReference type="DisProt" id="DP00537"/>
<dbReference type="DisProt" id="DP01325">
    <molecule id="O43236-6"/>
</dbReference>
<dbReference type="FunFam" id="3.40.50.300:FF:000064">
    <property type="entry name" value="Septin 4"/>
    <property type="match status" value="1"/>
</dbReference>
<dbReference type="Gene3D" id="3.40.50.300">
    <property type="entry name" value="P-loop containing nucleotide triphosphate hydrolases"/>
    <property type="match status" value="1"/>
</dbReference>
<dbReference type="InterPro" id="IPR030379">
    <property type="entry name" value="G_SEPTIN_dom"/>
</dbReference>
<dbReference type="InterPro" id="IPR027417">
    <property type="entry name" value="P-loop_NTPase"/>
</dbReference>
<dbReference type="InterPro" id="IPR016491">
    <property type="entry name" value="Septin"/>
</dbReference>
<dbReference type="PANTHER" id="PTHR18884">
    <property type="entry name" value="SEPTIN"/>
    <property type="match status" value="1"/>
</dbReference>
<dbReference type="Pfam" id="PF00735">
    <property type="entry name" value="Septin"/>
    <property type="match status" value="1"/>
</dbReference>
<dbReference type="SUPFAM" id="SSF52540">
    <property type="entry name" value="P-loop containing nucleoside triphosphate hydrolases"/>
    <property type="match status" value="1"/>
</dbReference>
<dbReference type="PROSITE" id="PS51719">
    <property type="entry name" value="G_SEPTIN"/>
    <property type="match status" value="1"/>
</dbReference>